<gene>
    <name evidence="1" type="primary">prcB</name>
    <name type="ordered locus">TBFG_12142</name>
</gene>
<protein>
    <recommendedName>
        <fullName evidence="1">Proteasome subunit beta</fullName>
        <ecNumber evidence="1">3.4.25.1</ecNumber>
    </recommendedName>
    <alternativeName>
        <fullName evidence="1">20S proteasome beta subunit</fullName>
    </alternativeName>
    <alternativeName>
        <fullName evidence="1">Proteasome core protein PrcB</fullName>
    </alternativeName>
</protein>
<sequence>MTWPLPDRLSINSLSGTPAVDLSSFTDFLRRQAPELLPASISGGAPLAGGDAQLPHGTTIVALKYPGGVVMAGDRRSTQGNMISGRDVRKVYITDDYTATGIAGTAAVAVEFARLYAVELEHYEKLEGVPLTFAGKINRLAIMVRGNLAAAMQGLLALPLLAGYDIHASDPQSAGRIVSFDAAGGWNIEEEGYQAVGSGSLFAKSSMKKLYSQVTDGDSGLRVAVEALYDAADDDSATGGPDLVRGIFPTAVIIDADGAVDVPESRIAELARAIIESRSGADTFGSDGGEK</sequence>
<evidence type="ECO:0000255" key="1">
    <source>
        <dbReference type="HAMAP-Rule" id="MF_02113"/>
    </source>
</evidence>
<accession>A5WP84</accession>
<reference key="1">
    <citation type="submission" date="2007-04" db="EMBL/GenBank/DDBJ databases">
        <title>The complete genome sequence of Mycobacterium tuberculosis F11.</title>
        <authorList>
            <person name="Birren B."/>
            <person name="Lander E."/>
            <person name="Galagan J."/>
            <person name="Devon K."/>
            <person name="Nusbaum C."/>
            <person name="Borowsky M.L."/>
            <person name="Grabherr M."/>
            <person name="Mauceli E."/>
            <person name="Brockman W."/>
            <person name="Young S."/>
            <person name="LaButti K."/>
            <person name="Pushparaj V."/>
            <person name="Sykes S."/>
            <person name="Baldwin J."/>
            <person name="Fitzgerald M."/>
            <person name="Bloom T."/>
            <person name="Zimmer A."/>
            <person name="Settipalli S."/>
            <person name="Shea T."/>
            <person name="Arachchi H."/>
            <person name="Macdonald P."/>
            <person name="Abouelleil A."/>
            <person name="Lui A."/>
            <person name="Priest M."/>
            <person name="Berlin A."/>
            <person name="Gearin G."/>
            <person name="Brown A."/>
            <person name="Aftuck L."/>
            <person name="Bessette D."/>
            <person name="Allen N."/>
            <person name="Lubonja R."/>
            <person name="Lokyitsang T."/>
            <person name="Matthews C."/>
            <person name="Dunbar C."/>
            <person name="Benamara M."/>
            <person name="Nguyen T."/>
            <person name="Negash T."/>
            <person name="DeCaprio D."/>
            <person name="Crawford M."/>
            <person name="Koehrsen M."/>
            <person name="Engels R."/>
            <person name="Montgomery P."/>
            <person name="Pearson M."/>
            <person name="Howarth C."/>
            <person name="Kodira C."/>
            <person name="Zeng Q."/>
            <person name="Yandava C."/>
            <person name="O'Leary S."/>
            <person name="Alvarado L."/>
            <person name="Victor T."/>
            <person name="Murray M."/>
        </authorList>
    </citation>
    <scope>NUCLEOTIDE SEQUENCE [LARGE SCALE GENOMIC DNA]</scope>
    <source>
        <strain>F11</strain>
    </source>
</reference>
<keyword id="KW-0068">Autocatalytic cleavage</keyword>
<keyword id="KW-0963">Cytoplasm</keyword>
<keyword id="KW-0378">Hydrolase</keyword>
<keyword id="KW-0645">Protease</keyword>
<keyword id="KW-0647">Proteasome</keyword>
<keyword id="KW-0888">Threonine protease</keyword>
<keyword id="KW-0865">Zymogen</keyword>
<name>PSB_MYCTF</name>
<proteinExistence type="inferred from homology"/>
<feature type="propeptide" id="PRO_0000397548" description="Removed in mature form; by autocatalysis" evidence="1">
    <location>
        <begin position="1"/>
        <end position="57"/>
    </location>
</feature>
<feature type="chain" id="PRO_0000397549" description="Proteasome subunit beta">
    <location>
        <begin position="58"/>
        <end position="291"/>
    </location>
</feature>
<feature type="active site" description="Nucleophile" evidence="1">
    <location>
        <position position="58"/>
    </location>
</feature>
<dbReference type="EC" id="3.4.25.1" evidence="1"/>
<dbReference type="EMBL" id="CP000717">
    <property type="protein sequence ID" value="ABR06473.1"/>
    <property type="molecule type" value="Genomic_DNA"/>
</dbReference>
<dbReference type="RefSeq" id="WP_003411023.1">
    <property type="nucleotide sequence ID" value="NZ_KK339377.1"/>
</dbReference>
<dbReference type="SMR" id="A5WP84"/>
<dbReference type="MEROPS" id="T01.005"/>
<dbReference type="KEGG" id="mtf:TBFG_12142"/>
<dbReference type="PATRIC" id="fig|336982.11.peg.2351"/>
<dbReference type="HOGENOM" id="CLU_035750_2_0_11"/>
<dbReference type="UniPathway" id="UPA00997"/>
<dbReference type="GO" id="GO:0005737">
    <property type="term" value="C:cytoplasm"/>
    <property type="evidence" value="ECO:0007669"/>
    <property type="project" value="UniProtKB-SubCell"/>
</dbReference>
<dbReference type="GO" id="GO:0019774">
    <property type="term" value="C:proteasome core complex, beta-subunit complex"/>
    <property type="evidence" value="ECO:0007669"/>
    <property type="project" value="UniProtKB-UniRule"/>
</dbReference>
<dbReference type="GO" id="GO:0004298">
    <property type="term" value="F:threonine-type endopeptidase activity"/>
    <property type="evidence" value="ECO:0007669"/>
    <property type="project" value="UniProtKB-UniRule"/>
</dbReference>
<dbReference type="GO" id="GO:0019941">
    <property type="term" value="P:modification-dependent protein catabolic process"/>
    <property type="evidence" value="ECO:0007669"/>
    <property type="project" value="UniProtKB-UniRule"/>
</dbReference>
<dbReference type="GO" id="GO:0010498">
    <property type="term" value="P:proteasomal protein catabolic process"/>
    <property type="evidence" value="ECO:0007669"/>
    <property type="project" value="UniProtKB-UniRule"/>
</dbReference>
<dbReference type="CDD" id="cd01906">
    <property type="entry name" value="proteasome_protease_HslV"/>
    <property type="match status" value="1"/>
</dbReference>
<dbReference type="FunFam" id="3.60.20.10:FF:000046">
    <property type="entry name" value="Proteasome subunit beta"/>
    <property type="match status" value="1"/>
</dbReference>
<dbReference type="Gene3D" id="3.60.20.10">
    <property type="entry name" value="Glutamine Phosphoribosylpyrophosphate, subunit 1, domain 1"/>
    <property type="match status" value="1"/>
</dbReference>
<dbReference type="HAMAP" id="MF_02113_B">
    <property type="entry name" value="Proteasome_B_B"/>
    <property type="match status" value="1"/>
</dbReference>
<dbReference type="InterPro" id="IPR029055">
    <property type="entry name" value="Ntn_hydrolases_N"/>
</dbReference>
<dbReference type="InterPro" id="IPR001353">
    <property type="entry name" value="Proteasome_sua/b"/>
</dbReference>
<dbReference type="InterPro" id="IPR023333">
    <property type="entry name" value="Proteasome_suB-type"/>
</dbReference>
<dbReference type="InterPro" id="IPR022483">
    <property type="entry name" value="PSB_actinobac"/>
</dbReference>
<dbReference type="NCBIfam" id="TIGR03690">
    <property type="entry name" value="20S_bact_beta"/>
    <property type="match status" value="1"/>
</dbReference>
<dbReference type="PANTHER" id="PTHR32194:SF0">
    <property type="entry name" value="ATP-DEPENDENT PROTEASE SUBUNIT HSLV"/>
    <property type="match status" value="1"/>
</dbReference>
<dbReference type="PANTHER" id="PTHR32194">
    <property type="entry name" value="METALLOPROTEASE TLDD"/>
    <property type="match status" value="1"/>
</dbReference>
<dbReference type="Pfam" id="PF00227">
    <property type="entry name" value="Proteasome"/>
    <property type="match status" value="1"/>
</dbReference>
<dbReference type="SUPFAM" id="SSF56235">
    <property type="entry name" value="N-terminal nucleophile aminohydrolases (Ntn hydrolases)"/>
    <property type="match status" value="1"/>
</dbReference>
<dbReference type="PROSITE" id="PS51476">
    <property type="entry name" value="PROTEASOME_BETA_2"/>
    <property type="match status" value="1"/>
</dbReference>
<comment type="function">
    <text evidence="1">Component of the proteasome core, a large protease complex with broad specificity involved in protein degradation.</text>
</comment>
<comment type="catalytic activity">
    <reaction evidence="1">
        <text>Cleavage of peptide bonds with very broad specificity.</text>
        <dbReference type="EC" id="3.4.25.1"/>
    </reaction>
</comment>
<comment type="activity regulation">
    <text evidence="1">The formation of the proteasomal ATPase ARC-20S proteasome complex, likely via the docking of the C-termini of ARC into the intersubunit pockets in the alpha-rings, may trigger opening of the gate for substrate entry. Interconversion between the open-gate and close-gate conformations leads to a dynamic regulation of the 20S proteasome proteolysis activity.</text>
</comment>
<comment type="pathway">
    <text evidence="1">Protein degradation; proteasomal Pup-dependent pathway.</text>
</comment>
<comment type="subunit">
    <text evidence="1">The 20S proteasome core is composed of 14 alpha and 14 beta subunits that assemble into four stacked heptameric rings, resulting in a barrel-shaped structure. The two inner rings, each composed of seven catalytic beta subunits, are sandwiched by two outer rings, each composed of seven alpha subunits. The catalytic chamber with the active sites is on the inside of the barrel. Has a gated structure, the ends of the cylinder being occluded by the N-termini of the alpha-subunits. Is capped by the proteasome-associated ATPase, ARC.</text>
</comment>
<comment type="subcellular location">
    <subcellularLocation>
        <location evidence="1">Cytoplasm</location>
    </subcellularLocation>
</comment>
<comment type="similarity">
    <text evidence="1">Belongs to the peptidase T1B family.</text>
</comment>
<organism>
    <name type="scientific">Mycobacterium tuberculosis (strain F11)</name>
    <dbReference type="NCBI Taxonomy" id="336982"/>
    <lineage>
        <taxon>Bacteria</taxon>
        <taxon>Bacillati</taxon>
        <taxon>Actinomycetota</taxon>
        <taxon>Actinomycetes</taxon>
        <taxon>Mycobacteriales</taxon>
        <taxon>Mycobacteriaceae</taxon>
        <taxon>Mycobacterium</taxon>
        <taxon>Mycobacterium tuberculosis complex</taxon>
    </lineage>
</organism>